<accession>Q65Q41</accession>
<feature type="chain" id="PRO_0000138984" description="Multifunctional CCA protein">
    <location>
        <begin position="1"/>
        <end position="419"/>
    </location>
</feature>
<feature type="domain" description="HD" evidence="1">
    <location>
        <begin position="228"/>
        <end position="334"/>
    </location>
</feature>
<feature type="binding site" evidence="1">
    <location>
        <position position="8"/>
    </location>
    <ligand>
        <name>ATP</name>
        <dbReference type="ChEBI" id="CHEBI:30616"/>
    </ligand>
</feature>
<feature type="binding site" evidence="1">
    <location>
        <position position="8"/>
    </location>
    <ligand>
        <name>CTP</name>
        <dbReference type="ChEBI" id="CHEBI:37563"/>
    </ligand>
</feature>
<feature type="binding site" evidence="1">
    <location>
        <position position="11"/>
    </location>
    <ligand>
        <name>ATP</name>
        <dbReference type="ChEBI" id="CHEBI:30616"/>
    </ligand>
</feature>
<feature type="binding site" evidence="1">
    <location>
        <position position="11"/>
    </location>
    <ligand>
        <name>CTP</name>
        <dbReference type="ChEBI" id="CHEBI:37563"/>
    </ligand>
</feature>
<feature type="binding site" evidence="1">
    <location>
        <position position="21"/>
    </location>
    <ligand>
        <name>Mg(2+)</name>
        <dbReference type="ChEBI" id="CHEBI:18420"/>
    </ligand>
</feature>
<feature type="binding site" evidence="1">
    <location>
        <position position="23"/>
    </location>
    <ligand>
        <name>Mg(2+)</name>
        <dbReference type="ChEBI" id="CHEBI:18420"/>
    </ligand>
</feature>
<feature type="binding site" evidence="1">
    <location>
        <position position="91"/>
    </location>
    <ligand>
        <name>ATP</name>
        <dbReference type="ChEBI" id="CHEBI:30616"/>
    </ligand>
</feature>
<feature type="binding site" evidence="1">
    <location>
        <position position="91"/>
    </location>
    <ligand>
        <name>CTP</name>
        <dbReference type="ChEBI" id="CHEBI:37563"/>
    </ligand>
</feature>
<feature type="binding site" evidence="1">
    <location>
        <position position="137"/>
    </location>
    <ligand>
        <name>ATP</name>
        <dbReference type="ChEBI" id="CHEBI:30616"/>
    </ligand>
</feature>
<feature type="binding site" evidence="1">
    <location>
        <position position="137"/>
    </location>
    <ligand>
        <name>CTP</name>
        <dbReference type="ChEBI" id="CHEBI:37563"/>
    </ligand>
</feature>
<feature type="binding site" evidence="1">
    <location>
        <position position="140"/>
    </location>
    <ligand>
        <name>ATP</name>
        <dbReference type="ChEBI" id="CHEBI:30616"/>
    </ligand>
</feature>
<feature type="binding site" evidence="1">
    <location>
        <position position="140"/>
    </location>
    <ligand>
        <name>CTP</name>
        <dbReference type="ChEBI" id="CHEBI:37563"/>
    </ligand>
</feature>
<protein>
    <recommendedName>
        <fullName evidence="1">Multifunctional CCA protein</fullName>
    </recommendedName>
    <domain>
        <recommendedName>
            <fullName evidence="1">CCA-adding enzyme</fullName>
            <ecNumber evidence="1">2.7.7.72</ecNumber>
        </recommendedName>
        <alternativeName>
            <fullName evidence="1">CCA tRNA nucleotidyltransferase</fullName>
        </alternativeName>
        <alternativeName>
            <fullName evidence="1">tRNA CCA-pyrophosphorylase</fullName>
        </alternativeName>
        <alternativeName>
            <fullName evidence="1">tRNA adenylyl-/cytidylyl-transferase</fullName>
        </alternativeName>
        <alternativeName>
            <fullName evidence="1">tRNA nucleotidyltransferase</fullName>
        </alternativeName>
        <alternativeName>
            <fullName evidence="1">tRNA-NT</fullName>
        </alternativeName>
    </domain>
    <domain>
        <recommendedName>
            <fullName evidence="1">2'-nucleotidase</fullName>
            <ecNumber evidence="1">3.1.3.-</ecNumber>
        </recommendedName>
    </domain>
    <domain>
        <recommendedName>
            <fullName evidence="1">2',3'-cyclic phosphodiesterase</fullName>
            <ecNumber evidence="1">3.1.4.-</ecNumber>
        </recommendedName>
    </domain>
    <domain>
        <recommendedName>
            <fullName evidence="1">Phosphatase</fullName>
            <ecNumber evidence="1">3.1.3.-</ecNumber>
        </recommendedName>
    </domain>
</protein>
<evidence type="ECO:0000255" key="1">
    <source>
        <dbReference type="HAMAP-Rule" id="MF_01261"/>
    </source>
</evidence>
<gene>
    <name evidence="1" type="primary">cca</name>
    <name type="ordered locus">MS2312</name>
</gene>
<organism>
    <name type="scientific">Mannheimia succiniciproducens (strain KCTC 0769BP / MBEL55E)</name>
    <dbReference type="NCBI Taxonomy" id="221988"/>
    <lineage>
        <taxon>Bacteria</taxon>
        <taxon>Pseudomonadati</taxon>
        <taxon>Pseudomonadota</taxon>
        <taxon>Gammaproteobacteria</taxon>
        <taxon>Pasteurellales</taxon>
        <taxon>Pasteurellaceae</taxon>
        <taxon>Basfia</taxon>
    </lineage>
</organism>
<sequence>MQTYLVGGAVRDQLLNLPVKDRDWVVVGATPEQLLSLGYQQVGRDFPVFLHPKTKEEYALARTERKSGAGYTGFICDFSPHISLEQDLIRRDLTINAIAQDNQGKFIDPYEGISDLKNRTLRHISPAFAEDPLRVLRVARFAARYHQLDFSIAPETIALMAEITEKGELQQLTIERVWQETEKALKEKNPEIYFQVLLQVGALKILFPELYALYGVPNPAQYHPEIDSFLHTMLVLQQAVRLTENTEFNKSAVRFAAICHDLGKALTPKDILPHHYGHEKAGIQPIRTLSNRLKVPTYYKELAEFTCEYHSYIHKAFELKPETVIKLFNKLDVWRKPQRFEELMLVCVADTRGRTGFEQTAYPQKDYLRQLYQTALQVNVQQVIEDGFEKQGIRDELTRRRTIAVKTKKAEILPRFVGQ</sequence>
<comment type="function">
    <text evidence="1">Catalyzes the addition and repair of the essential 3'-terminal CCA sequence in tRNAs without using a nucleic acid template. Adds these three nucleotides in the order of C, C, and A to the tRNA nucleotide-73, using CTP and ATP as substrates and producing inorganic pyrophosphate. tRNA 3'-terminal CCA addition is required both for tRNA processing and repair. Also involved in tRNA surveillance by mediating tandem CCA addition to generate a CCACCA at the 3' terminus of unstable tRNAs. While stable tRNAs receive only 3'-terminal CCA, unstable tRNAs are marked with CCACCA and rapidly degraded.</text>
</comment>
<comment type="catalytic activity">
    <reaction evidence="1">
        <text>a tRNA precursor + 2 CTP + ATP = a tRNA with a 3' CCA end + 3 diphosphate</text>
        <dbReference type="Rhea" id="RHEA:14433"/>
        <dbReference type="Rhea" id="RHEA-COMP:10465"/>
        <dbReference type="Rhea" id="RHEA-COMP:10468"/>
        <dbReference type="ChEBI" id="CHEBI:30616"/>
        <dbReference type="ChEBI" id="CHEBI:33019"/>
        <dbReference type="ChEBI" id="CHEBI:37563"/>
        <dbReference type="ChEBI" id="CHEBI:74896"/>
        <dbReference type="ChEBI" id="CHEBI:83071"/>
        <dbReference type="EC" id="2.7.7.72"/>
    </reaction>
</comment>
<comment type="catalytic activity">
    <reaction evidence="1">
        <text>a tRNA with a 3' CCA end + 2 CTP + ATP = a tRNA with a 3' CCACCA end + 3 diphosphate</text>
        <dbReference type="Rhea" id="RHEA:76235"/>
        <dbReference type="Rhea" id="RHEA-COMP:10468"/>
        <dbReference type="Rhea" id="RHEA-COMP:18655"/>
        <dbReference type="ChEBI" id="CHEBI:30616"/>
        <dbReference type="ChEBI" id="CHEBI:33019"/>
        <dbReference type="ChEBI" id="CHEBI:37563"/>
        <dbReference type="ChEBI" id="CHEBI:83071"/>
        <dbReference type="ChEBI" id="CHEBI:195187"/>
    </reaction>
    <physiologicalReaction direction="left-to-right" evidence="1">
        <dbReference type="Rhea" id="RHEA:76236"/>
    </physiologicalReaction>
</comment>
<comment type="cofactor">
    <cofactor evidence="1">
        <name>Mg(2+)</name>
        <dbReference type="ChEBI" id="CHEBI:18420"/>
    </cofactor>
    <text evidence="1">Magnesium is required for nucleotidyltransferase activity.</text>
</comment>
<comment type="cofactor">
    <cofactor evidence="1">
        <name>Ni(2+)</name>
        <dbReference type="ChEBI" id="CHEBI:49786"/>
    </cofactor>
    <text evidence="1">Nickel for phosphatase activity.</text>
</comment>
<comment type="subunit">
    <text evidence="1">Monomer. Can also form homodimers and oligomers.</text>
</comment>
<comment type="domain">
    <text evidence="1">Comprises two domains: an N-terminal domain containing the nucleotidyltransferase activity and a C-terminal HD domain associated with both phosphodiesterase and phosphatase activities.</text>
</comment>
<comment type="miscellaneous">
    <text evidence="1">A single active site specifically recognizes both ATP and CTP and is responsible for their addition.</text>
</comment>
<comment type="similarity">
    <text evidence="1">Belongs to the tRNA nucleotidyltransferase/poly(A) polymerase family. Bacterial CCA-adding enzyme type 1 subfamily.</text>
</comment>
<reference key="1">
    <citation type="journal article" date="2004" name="Nat. Biotechnol.">
        <title>The genome sequence of the capnophilic rumen bacterium Mannheimia succiniciproducens.</title>
        <authorList>
            <person name="Hong S.H."/>
            <person name="Kim J.S."/>
            <person name="Lee S.Y."/>
            <person name="In Y.H."/>
            <person name="Choi S.S."/>
            <person name="Rih J.-K."/>
            <person name="Kim C.H."/>
            <person name="Jeong H."/>
            <person name="Hur C.G."/>
            <person name="Kim J.J."/>
        </authorList>
    </citation>
    <scope>NUCLEOTIDE SEQUENCE [LARGE SCALE GENOMIC DNA]</scope>
    <source>
        <strain>KCTC 0769BP / MBEL55E</strain>
    </source>
</reference>
<proteinExistence type="inferred from homology"/>
<dbReference type="EC" id="2.7.7.72" evidence="1"/>
<dbReference type="EC" id="3.1.3.-" evidence="1"/>
<dbReference type="EC" id="3.1.4.-" evidence="1"/>
<dbReference type="EMBL" id="AE016827">
    <property type="protein sequence ID" value="AAU38919.1"/>
    <property type="molecule type" value="Genomic_DNA"/>
</dbReference>
<dbReference type="RefSeq" id="WP_011201457.1">
    <property type="nucleotide sequence ID" value="NC_006300.1"/>
</dbReference>
<dbReference type="SMR" id="Q65Q41"/>
<dbReference type="STRING" id="221988.MS2312"/>
<dbReference type="KEGG" id="msu:MS2312"/>
<dbReference type="eggNOG" id="COG0617">
    <property type="taxonomic scope" value="Bacteria"/>
</dbReference>
<dbReference type="HOGENOM" id="CLU_015961_1_1_6"/>
<dbReference type="OrthoDB" id="9805698at2"/>
<dbReference type="Proteomes" id="UP000000607">
    <property type="component" value="Chromosome"/>
</dbReference>
<dbReference type="GO" id="GO:0005524">
    <property type="term" value="F:ATP binding"/>
    <property type="evidence" value="ECO:0007669"/>
    <property type="project" value="UniProtKB-UniRule"/>
</dbReference>
<dbReference type="GO" id="GO:0004810">
    <property type="term" value="F:CCA tRNA nucleotidyltransferase activity"/>
    <property type="evidence" value="ECO:0007669"/>
    <property type="project" value="UniProtKB-UniRule"/>
</dbReference>
<dbReference type="GO" id="GO:0004112">
    <property type="term" value="F:cyclic-nucleotide phosphodiesterase activity"/>
    <property type="evidence" value="ECO:0007669"/>
    <property type="project" value="UniProtKB-UniRule"/>
</dbReference>
<dbReference type="GO" id="GO:0000287">
    <property type="term" value="F:magnesium ion binding"/>
    <property type="evidence" value="ECO:0007669"/>
    <property type="project" value="UniProtKB-UniRule"/>
</dbReference>
<dbReference type="GO" id="GO:0016791">
    <property type="term" value="F:phosphatase activity"/>
    <property type="evidence" value="ECO:0007669"/>
    <property type="project" value="UniProtKB-UniRule"/>
</dbReference>
<dbReference type="GO" id="GO:0000049">
    <property type="term" value="F:tRNA binding"/>
    <property type="evidence" value="ECO:0007669"/>
    <property type="project" value="UniProtKB-UniRule"/>
</dbReference>
<dbReference type="GO" id="GO:0042245">
    <property type="term" value="P:RNA repair"/>
    <property type="evidence" value="ECO:0007669"/>
    <property type="project" value="UniProtKB-KW"/>
</dbReference>
<dbReference type="GO" id="GO:0001680">
    <property type="term" value="P:tRNA 3'-terminal CCA addition"/>
    <property type="evidence" value="ECO:0007669"/>
    <property type="project" value="UniProtKB-UniRule"/>
</dbReference>
<dbReference type="CDD" id="cd00077">
    <property type="entry name" value="HDc"/>
    <property type="match status" value="1"/>
</dbReference>
<dbReference type="CDD" id="cd05398">
    <property type="entry name" value="NT_ClassII-CCAase"/>
    <property type="match status" value="1"/>
</dbReference>
<dbReference type="Gene3D" id="3.30.460.10">
    <property type="entry name" value="Beta Polymerase, domain 2"/>
    <property type="match status" value="1"/>
</dbReference>
<dbReference type="Gene3D" id="1.10.3090.10">
    <property type="entry name" value="cca-adding enzyme, domain 2"/>
    <property type="match status" value="1"/>
</dbReference>
<dbReference type="HAMAP" id="MF_01261">
    <property type="entry name" value="CCA_bact_type1"/>
    <property type="match status" value="1"/>
</dbReference>
<dbReference type="HAMAP" id="MF_01262">
    <property type="entry name" value="CCA_bact_type2"/>
    <property type="match status" value="1"/>
</dbReference>
<dbReference type="InterPro" id="IPR012006">
    <property type="entry name" value="CCA_bact"/>
</dbReference>
<dbReference type="InterPro" id="IPR003607">
    <property type="entry name" value="HD/PDEase_dom"/>
</dbReference>
<dbReference type="InterPro" id="IPR006674">
    <property type="entry name" value="HD_domain"/>
</dbReference>
<dbReference type="InterPro" id="IPR043519">
    <property type="entry name" value="NT_sf"/>
</dbReference>
<dbReference type="InterPro" id="IPR002646">
    <property type="entry name" value="PolA_pol_head_dom"/>
</dbReference>
<dbReference type="InterPro" id="IPR032828">
    <property type="entry name" value="PolyA_RNA-bd"/>
</dbReference>
<dbReference type="InterPro" id="IPR050124">
    <property type="entry name" value="tRNA_CCA-adding_enzyme"/>
</dbReference>
<dbReference type="NCBIfam" id="NF008137">
    <property type="entry name" value="PRK10885.1"/>
    <property type="match status" value="1"/>
</dbReference>
<dbReference type="PANTHER" id="PTHR47545">
    <property type="entry name" value="MULTIFUNCTIONAL CCA PROTEIN"/>
    <property type="match status" value="1"/>
</dbReference>
<dbReference type="PANTHER" id="PTHR47545:SF1">
    <property type="entry name" value="MULTIFUNCTIONAL CCA PROTEIN"/>
    <property type="match status" value="1"/>
</dbReference>
<dbReference type="Pfam" id="PF01966">
    <property type="entry name" value="HD"/>
    <property type="match status" value="1"/>
</dbReference>
<dbReference type="Pfam" id="PF01743">
    <property type="entry name" value="PolyA_pol"/>
    <property type="match status" value="1"/>
</dbReference>
<dbReference type="Pfam" id="PF12627">
    <property type="entry name" value="PolyA_pol_RNAbd"/>
    <property type="match status" value="1"/>
</dbReference>
<dbReference type="PIRSF" id="PIRSF000813">
    <property type="entry name" value="CCA_bact"/>
    <property type="match status" value="1"/>
</dbReference>
<dbReference type="SMART" id="SM00471">
    <property type="entry name" value="HDc"/>
    <property type="match status" value="1"/>
</dbReference>
<dbReference type="SUPFAM" id="SSF81301">
    <property type="entry name" value="Nucleotidyltransferase"/>
    <property type="match status" value="1"/>
</dbReference>
<dbReference type="SUPFAM" id="SSF81891">
    <property type="entry name" value="Poly A polymerase C-terminal region-like"/>
    <property type="match status" value="1"/>
</dbReference>
<dbReference type="PROSITE" id="PS51831">
    <property type="entry name" value="HD"/>
    <property type="match status" value="1"/>
</dbReference>
<name>CCA_MANSM</name>
<keyword id="KW-0067">ATP-binding</keyword>
<keyword id="KW-0378">Hydrolase</keyword>
<keyword id="KW-0460">Magnesium</keyword>
<keyword id="KW-0479">Metal-binding</keyword>
<keyword id="KW-0511">Multifunctional enzyme</keyword>
<keyword id="KW-0533">Nickel</keyword>
<keyword id="KW-0547">Nucleotide-binding</keyword>
<keyword id="KW-0548">Nucleotidyltransferase</keyword>
<keyword id="KW-0692">RNA repair</keyword>
<keyword id="KW-0694">RNA-binding</keyword>
<keyword id="KW-0808">Transferase</keyword>
<keyword id="KW-0819">tRNA processing</keyword>